<evidence type="ECO:0000255" key="1">
    <source>
        <dbReference type="HAMAP-Rule" id="MF_03105"/>
    </source>
</evidence>
<sequence length="452" mass="50329">MSFRVKGWSDQFSESFYERATTLLTAALNKGTKHSMIADHITVKELDLGPQPPQLEILEVGDLAPDRFQGLFNLHYSGDASLVLQTKIRANPLSVQKSNVPSFSSRNTMLASRAPLTVPMFLRLSDLKLNGIVVLVFSKQKGITVVFRNDPLESVRVSSSFDSIPAIARFLQREIEVQLVSLFQEELPSIIYKMSRIWFAKSDSNLSFQKIPFTSPNQSHTSLANYNPDLLDGPPDYHESTKVDTHLPIKMGPLDVQTHPNIRSIASLALSRKALLPISSPSIPMSIYRSTPPDTIIQQLTTQSDDISAVSSPATQYSASDYLGSNDTTARPSIFGRSHGTSQFRRRERVKKRHVIKIHEASNKSASSSETFVGSKNVDLTESAFDSIPDTPTKIITNINKLKRNYTITNNWLENLQQKIPSEVDNGKVSGLQYSAFKLLMLQRLMAAKGSF</sequence>
<proteinExistence type="inferred from homology"/>
<protein>
    <recommendedName>
        <fullName evidence="1">Mitochondrial distribution and morphology protein 34</fullName>
    </recommendedName>
</protein>
<comment type="function">
    <text evidence="1">Component of the ERMES/MDM complex, which serves as a molecular tether to connect the endoplasmic reticulum (ER) and mitochondria. Components of this complex are involved in the control of mitochondrial shape and protein biogenesis, and function in nonvesicular lipid trafficking between the ER and mitochondria. Mdm34 is required for the interaction of the ER-resident membrane protein mmm1 and the outer mitochondrial membrane-resident beta-barrel protein mdm10.</text>
</comment>
<comment type="subunit">
    <text evidence="1">Component of the ER-mitochondria encounter structure (ERMES) or MDM complex, composed of mmm1, mdm10, mdm12 and mdm34.</text>
</comment>
<comment type="subcellular location">
    <subcellularLocation>
        <location evidence="1">Mitochondrion outer membrane</location>
        <topology evidence="1">Multi-pass membrane protein</topology>
    </subcellularLocation>
    <text evidence="1">The ERMES/MDM complex localizes to a few discrete foci (around 10 per single cell), that represent mitochondria-endoplasmic reticulum junctions. These foci are often found next to mtDNA nucleoids.</text>
</comment>
<comment type="domain">
    <text evidence="1">Lacks alpha-helical transmembrane segments, suggesting that it resides in the membrane via beta-sheet conformations similar to those predicted for other outer membrane proteins and porin.</text>
</comment>
<comment type="domain">
    <text evidence="1">The SMP-LTD domain is a barrel-like domain that can bind various types of glycerophospholipids in its interior and mediate their transfer between two adjacent bilayers.</text>
</comment>
<comment type="similarity">
    <text evidence="1">Belongs to the MDM34 family.</text>
</comment>
<reference key="1">
    <citation type="journal article" date="2002" name="Nature">
        <title>The genome sequence of Schizosaccharomyces pombe.</title>
        <authorList>
            <person name="Wood V."/>
            <person name="Gwilliam R."/>
            <person name="Rajandream M.A."/>
            <person name="Lyne M.H."/>
            <person name="Lyne R."/>
            <person name="Stewart A."/>
            <person name="Sgouros J.G."/>
            <person name="Peat N."/>
            <person name="Hayles J."/>
            <person name="Baker S.G."/>
            <person name="Basham D."/>
            <person name="Bowman S."/>
            <person name="Brooks K."/>
            <person name="Brown D."/>
            <person name="Brown S."/>
            <person name="Chillingworth T."/>
            <person name="Churcher C.M."/>
            <person name="Collins M."/>
            <person name="Connor R."/>
            <person name="Cronin A."/>
            <person name="Davis P."/>
            <person name="Feltwell T."/>
            <person name="Fraser A."/>
            <person name="Gentles S."/>
            <person name="Goble A."/>
            <person name="Hamlin N."/>
            <person name="Harris D.E."/>
            <person name="Hidalgo J."/>
            <person name="Hodgson G."/>
            <person name="Holroyd S."/>
            <person name="Hornsby T."/>
            <person name="Howarth S."/>
            <person name="Huckle E.J."/>
            <person name="Hunt S."/>
            <person name="Jagels K."/>
            <person name="James K.D."/>
            <person name="Jones L."/>
            <person name="Jones M."/>
            <person name="Leather S."/>
            <person name="McDonald S."/>
            <person name="McLean J."/>
            <person name="Mooney P."/>
            <person name="Moule S."/>
            <person name="Mungall K.L."/>
            <person name="Murphy L.D."/>
            <person name="Niblett D."/>
            <person name="Odell C."/>
            <person name="Oliver K."/>
            <person name="O'Neil S."/>
            <person name="Pearson D."/>
            <person name="Quail M.A."/>
            <person name="Rabbinowitsch E."/>
            <person name="Rutherford K.M."/>
            <person name="Rutter S."/>
            <person name="Saunders D."/>
            <person name="Seeger K."/>
            <person name="Sharp S."/>
            <person name="Skelton J."/>
            <person name="Simmonds M.N."/>
            <person name="Squares R."/>
            <person name="Squares S."/>
            <person name="Stevens K."/>
            <person name="Taylor K."/>
            <person name="Taylor R.G."/>
            <person name="Tivey A."/>
            <person name="Walsh S.V."/>
            <person name="Warren T."/>
            <person name="Whitehead S."/>
            <person name="Woodward J.R."/>
            <person name="Volckaert G."/>
            <person name="Aert R."/>
            <person name="Robben J."/>
            <person name="Grymonprez B."/>
            <person name="Weltjens I."/>
            <person name="Vanstreels E."/>
            <person name="Rieger M."/>
            <person name="Schaefer M."/>
            <person name="Mueller-Auer S."/>
            <person name="Gabel C."/>
            <person name="Fuchs M."/>
            <person name="Duesterhoeft A."/>
            <person name="Fritzc C."/>
            <person name="Holzer E."/>
            <person name="Moestl D."/>
            <person name="Hilbert H."/>
            <person name="Borzym K."/>
            <person name="Langer I."/>
            <person name="Beck A."/>
            <person name="Lehrach H."/>
            <person name="Reinhardt R."/>
            <person name="Pohl T.M."/>
            <person name="Eger P."/>
            <person name="Zimmermann W."/>
            <person name="Wedler H."/>
            <person name="Wambutt R."/>
            <person name="Purnelle B."/>
            <person name="Goffeau A."/>
            <person name="Cadieu E."/>
            <person name="Dreano S."/>
            <person name="Gloux S."/>
            <person name="Lelaure V."/>
            <person name="Mottier S."/>
            <person name="Galibert F."/>
            <person name="Aves S.J."/>
            <person name="Xiang Z."/>
            <person name="Hunt C."/>
            <person name="Moore K."/>
            <person name="Hurst S.M."/>
            <person name="Lucas M."/>
            <person name="Rochet M."/>
            <person name="Gaillardin C."/>
            <person name="Tallada V.A."/>
            <person name="Garzon A."/>
            <person name="Thode G."/>
            <person name="Daga R.R."/>
            <person name="Cruzado L."/>
            <person name="Jimenez J."/>
            <person name="Sanchez M."/>
            <person name="del Rey F."/>
            <person name="Benito J."/>
            <person name="Dominguez A."/>
            <person name="Revuelta J.L."/>
            <person name="Moreno S."/>
            <person name="Armstrong J."/>
            <person name="Forsburg S.L."/>
            <person name="Cerutti L."/>
            <person name="Lowe T."/>
            <person name="McCombie W.R."/>
            <person name="Paulsen I."/>
            <person name="Potashkin J."/>
            <person name="Shpakovski G.V."/>
            <person name="Ussery D."/>
            <person name="Barrell B.G."/>
            <person name="Nurse P."/>
        </authorList>
    </citation>
    <scope>NUCLEOTIDE SEQUENCE [LARGE SCALE GENOMIC DNA]</scope>
    <source>
        <strain>972 / ATCC 24843</strain>
    </source>
</reference>
<reference key="2">
    <citation type="journal article" date="2006" name="Nat. Biotechnol.">
        <title>ORFeome cloning and global analysis of protein localization in the fission yeast Schizosaccharomyces pombe.</title>
        <authorList>
            <person name="Matsuyama A."/>
            <person name="Arai R."/>
            <person name="Yashiroda Y."/>
            <person name="Shirai A."/>
            <person name="Kamata A."/>
            <person name="Sekido S."/>
            <person name="Kobayashi Y."/>
            <person name="Hashimoto A."/>
            <person name="Hamamoto M."/>
            <person name="Hiraoka Y."/>
            <person name="Horinouchi S."/>
            <person name="Yoshida M."/>
        </authorList>
    </citation>
    <scope>SUBCELLULAR LOCATION [LARGE SCALE ANALYSIS]</scope>
</reference>
<organism>
    <name type="scientific">Schizosaccharomyces pombe (strain 972 / ATCC 24843)</name>
    <name type="common">Fission yeast</name>
    <dbReference type="NCBI Taxonomy" id="284812"/>
    <lineage>
        <taxon>Eukaryota</taxon>
        <taxon>Fungi</taxon>
        <taxon>Dikarya</taxon>
        <taxon>Ascomycota</taxon>
        <taxon>Taphrinomycotina</taxon>
        <taxon>Schizosaccharomycetes</taxon>
        <taxon>Schizosaccharomycetales</taxon>
        <taxon>Schizosaccharomycetaceae</taxon>
        <taxon>Schizosaccharomyces</taxon>
    </lineage>
</organism>
<dbReference type="EMBL" id="CU329671">
    <property type="protein sequence ID" value="CAB52038.1"/>
    <property type="molecule type" value="Genomic_DNA"/>
</dbReference>
<dbReference type="PIR" id="T39802">
    <property type="entry name" value="T39802"/>
</dbReference>
<dbReference type="RefSeq" id="NP_595696.1">
    <property type="nucleotide sequence ID" value="NM_001021593.2"/>
</dbReference>
<dbReference type="SMR" id="Q9UUC9"/>
<dbReference type="BioGRID" id="276916">
    <property type="interactions" value="2"/>
</dbReference>
<dbReference type="FunCoup" id="Q9UUC9">
    <property type="interactions" value="51"/>
</dbReference>
<dbReference type="STRING" id="284812.Q9UUC9"/>
<dbReference type="iPTMnet" id="Q9UUC9"/>
<dbReference type="PaxDb" id="4896-SPBC19C2.11c.1"/>
<dbReference type="EnsemblFungi" id="SPBC19C2.11c.1">
    <property type="protein sequence ID" value="SPBC19C2.11c.1:pep"/>
    <property type="gene ID" value="SPBC19C2.11c"/>
</dbReference>
<dbReference type="GeneID" id="2540388"/>
<dbReference type="KEGG" id="spo:2540388"/>
<dbReference type="PomBase" id="SPBC19C2.11c">
    <property type="gene designation" value="mdm34"/>
</dbReference>
<dbReference type="VEuPathDB" id="FungiDB:SPBC19C2.11c"/>
<dbReference type="eggNOG" id="ENOG502QT3W">
    <property type="taxonomic scope" value="Eukaryota"/>
</dbReference>
<dbReference type="HOGENOM" id="CLU_044755_0_0_1"/>
<dbReference type="InParanoid" id="Q9UUC9"/>
<dbReference type="OMA" id="PSIIYKM"/>
<dbReference type="PhylomeDB" id="Q9UUC9"/>
<dbReference type="PRO" id="PR:Q9UUC9"/>
<dbReference type="Proteomes" id="UP000002485">
    <property type="component" value="Chromosome II"/>
</dbReference>
<dbReference type="GO" id="GO:0032865">
    <property type="term" value="C:ERMES complex"/>
    <property type="evidence" value="ECO:0000318"/>
    <property type="project" value="GO_Central"/>
</dbReference>
<dbReference type="GO" id="GO:0005739">
    <property type="term" value="C:mitochondrion"/>
    <property type="evidence" value="ECO:0007005"/>
    <property type="project" value="PomBase"/>
</dbReference>
<dbReference type="GO" id="GO:0008289">
    <property type="term" value="F:lipid binding"/>
    <property type="evidence" value="ECO:0007669"/>
    <property type="project" value="UniProtKB-KW"/>
</dbReference>
<dbReference type="GO" id="GO:0120010">
    <property type="term" value="P:intermembrane phospholipid transfer"/>
    <property type="evidence" value="ECO:0000304"/>
    <property type="project" value="PomBase"/>
</dbReference>
<dbReference type="GO" id="GO:0000002">
    <property type="term" value="P:mitochondrial genome maintenance"/>
    <property type="evidence" value="ECO:0007669"/>
    <property type="project" value="UniProtKB-UniRule"/>
</dbReference>
<dbReference type="GO" id="GO:0007006">
    <property type="term" value="P:mitochondrial membrane organization"/>
    <property type="evidence" value="ECO:0000305"/>
    <property type="project" value="PomBase"/>
</dbReference>
<dbReference type="GO" id="GO:0007005">
    <property type="term" value="P:mitochondrion organization"/>
    <property type="evidence" value="ECO:0000318"/>
    <property type="project" value="GO_Central"/>
</dbReference>
<dbReference type="GO" id="GO:1990456">
    <property type="term" value="P:mitochondrion-endoplasmic reticulum membrane tethering"/>
    <property type="evidence" value="ECO:0000318"/>
    <property type="project" value="GO_Central"/>
</dbReference>
<dbReference type="GO" id="GO:0015914">
    <property type="term" value="P:phospholipid transport"/>
    <property type="evidence" value="ECO:0000318"/>
    <property type="project" value="GO_Central"/>
</dbReference>
<dbReference type="CDD" id="cd21673">
    <property type="entry name" value="SMP_Mdm34"/>
    <property type="match status" value="1"/>
</dbReference>
<dbReference type="HAMAP" id="MF_03105">
    <property type="entry name" value="Mdm34"/>
    <property type="match status" value="1"/>
</dbReference>
<dbReference type="InterPro" id="IPR027536">
    <property type="entry name" value="Mdm34"/>
</dbReference>
<dbReference type="InterPro" id="IPR031468">
    <property type="entry name" value="SMP_LBD"/>
</dbReference>
<dbReference type="PANTHER" id="PTHR28185">
    <property type="entry name" value="MITOCHONDRIAL DISTRIBUTION AND MORPHOLOGY PROTEIN 34"/>
    <property type="match status" value="1"/>
</dbReference>
<dbReference type="PANTHER" id="PTHR28185:SF1">
    <property type="entry name" value="MITOCHONDRIAL DISTRIBUTION AND MORPHOLOGY PROTEIN 34"/>
    <property type="match status" value="1"/>
</dbReference>
<dbReference type="PROSITE" id="PS51847">
    <property type="entry name" value="SMP"/>
    <property type="match status" value="1"/>
</dbReference>
<gene>
    <name evidence="1" type="primary">mdm34</name>
    <name type="ORF">SPBC19C2.11c</name>
</gene>
<name>MDM34_SCHPO</name>
<keyword id="KW-0445">Lipid transport</keyword>
<keyword id="KW-0446">Lipid-binding</keyword>
<keyword id="KW-0472">Membrane</keyword>
<keyword id="KW-0496">Mitochondrion</keyword>
<keyword id="KW-1000">Mitochondrion outer membrane</keyword>
<keyword id="KW-1185">Reference proteome</keyword>
<keyword id="KW-0812">Transmembrane</keyword>
<keyword id="KW-1134">Transmembrane beta strand</keyword>
<keyword id="KW-0813">Transport</keyword>
<feature type="chain" id="PRO_0000351437" description="Mitochondrial distribution and morphology protein 34">
    <location>
        <begin position="1"/>
        <end position="452"/>
    </location>
</feature>
<feature type="domain" description="SMP-LTD" evidence="1">
    <location>
        <begin position="1"/>
        <end position="196"/>
    </location>
</feature>
<accession>Q9UUC9</accession>